<evidence type="ECO:0000250" key="1"/>
<evidence type="ECO:0000250" key="2">
    <source>
        <dbReference type="UniProtKB" id="A0AUZ9"/>
    </source>
</evidence>
<evidence type="ECO:0000255" key="3">
    <source>
        <dbReference type="PROSITE-ProRule" id="PRU01397"/>
    </source>
</evidence>
<evidence type="ECO:0000256" key="4">
    <source>
        <dbReference type="SAM" id="MobiDB-lite"/>
    </source>
</evidence>
<evidence type="ECO:0000303" key="5">
    <source>
    </source>
</evidence>
<evidence type="ECO:0000303" key="6">
    <source ref="1"/>
</evidence>
<evidence type="ECO:0000305" key="7"/>
<evidence type="ECO:0007744" key="8">
    <source>
    </source>
</evidence>
<evidence type="ECO:0007744" key="9">
    <source>
    </source>
</evidence>
<feature type="chain" id="PRO_0000319583" description="KAT8 regulatory NSL complex subunit 1-like protein">
    <location>
        <begin position="1"/>
        <end position="991"/>
    </location>
</feature>
<feature type="domain" description="PEHE" evidence="3">
    <location>
        <begin position="798"/>
        <end position="919"/>
    </location>
</feature>
<feature type="region of interest" description="Disordered" evidence="4">
    <location>
        <begin position="443"/>
        <end position="462"/>
    </location>
</feature>
<feature type="region of interest" description="Disordered" evidence="4">
    <location>
        <begin position="749"/>
        <end position="770"/>
    </location>
</feature>
<feature type="compositionally biased region" description="Basic and acidic residues" evidence="4">
    <location>
        <begin position="450"/>
        <end position="461"/>
    </location>
</feature>
<feature type="compositionally biased region" description="Polar residues" evidence="4">
    <location>
        <begin position="749"/>
        <end position="763"/>
    </location>
</feature>
<feature type="modified residue" description="Phosphoserine" evidence="8">
    <location>
        <position position="463"/>
    </location>
</feature>
<feature type="modified residue" description="N6-acetyllysine" evidence="9">
    <location>
        <position position="863"/>
    </location>
</feature>
<feature type="cross-link" description="Glycyl lysine isopeptide (Lys-Gly) (interchain with G-Cter in SUMO2)" evidence="2">
    <location>
        <position position="136"/>
    </location>
</feature>
<feature type="splice variant" id="VSP_031502" description="In isoform 4." evidence="5">
    <original>NSST</original>
    <variation>YAKR</variation>
    <location>
        <begin position="365"/>
        <end position="368"/>
    </location>
</feature>
<feature type="splice variant" id="VSP_031503" description="In isoform 4." evidence="5">
    <location>
        <begin position="369"/>
        <end position="991"/>
    </location>
</feature>
<feature type="splice variant" id="VSP_031504" description="In isoform 5." evidence="5">
    <location>
        <begin position="412"/>
        <end position="446"/>
    </location>
</feature>
<feature type="splice variant" id="VSP_031505" description="In isoform 2." evidence="5">
    <original>GIVILE</original>
    <variation>VLLVFC</variation>
    <location>
        <begin position="412"/>
        <end position="417"/>
    </location>
</feature>
<feature type="splice variant" id="VSP_031506" description="In isoform 2." evidence="5">
    <location>
        <begin position="418"/>
        <end position="991"/>
    </location>
</feature>
<feature type="splice variant" id="VSP_031507" description="In isoform 3." evidence="6">
    <location>
        <begin position="677"/>
        <end position="720"/>
    </location>
</feature>
<feature type="sequence conflict" description="In Ref. 1; BAD90312, 2; BAE42157 and 3; CAQ52309/CAQ52187." evidence="7" ref="1 2 3">
    <original>A</original>
    <variation>T</variation>
    <location>
        <position position="162"/>
    </location>
</feature>
<feature type="sequence conflict" description="In Ref. 2; BAC38212." evidence="7" ref="2">
    <original>S</original>
    <variation>T</variation>
    <location>
        <position position="204"/>
    </location>
</feature>
<feature type="sequence conflict" description="In Ref. 1; BAD90312, 2; BAE42157 and 3; CAQ52309/CAQ52187." evidence="7" ref="1 2 3">
    <original>Q</original>
    <variation>E</variation>
    <location>
        <position position="219"/>
    </location>
</feature>
<feature type="sequence conflict" description="In Ref. 2; BAE42157." evidence="7" ref="2">
    <original>S</original>
    <variation>P</variation>
    <location>
        <position position="349"/>
    </location>
</feature>
<feature type="sequence conflict" description="In Ref. 1; BAD90312, 2; BAE42157 and 3; CAQ52309/CAQ52187." evidence="7" ref="1 2 3">
    <original>L</original>
    <variation>V</variation>
    <location>
        <position position="353"/>
    </location>
</feature>
<feature type="sequence conflict" description="In Ref. 1; BAD90312 and 3; CAQ52309/CAQ52187." evidence="7" ref="1 3">
    <original>P</original>
    <variation>A</variation>
    <location>
        <position position="894"/>
    </location>
</feature>
<feature type="sequence conflict" description="In Ref. 1; BAD90312 and 3; CAQ52309/CAQ52187." evidence="7" ref="1 3">
    <original>T</original>
    <variation>A</variation>
    <location>
        <position position="947"/>
    </location>
</feature>
<reference key="1">
    <citation type="submission" date="2005-02" db="EMBL/GenBank/DDBJ databases">
        <title>Prediction of the coding sequences of mouse homologues of KIAA gene. The complete nucleotide sequences of mouse KIAA-homologous cDNAs identified by screening of terminal sequences of cDNA clones randomly sampled from size-fractionated libraries.</title>
        <authorList>
            <person name="Okazaki N."/>
            <person name="Kikuno R.F."/>
            <person name="Ohara R."/>
            <person name="Inamoto S."/>
            <person name="Nagase T."/>
            <person name="Ohara O."/>
            <person name="Koga H."/>
        </authorList>
    </citation>
    <scope>NUCLEOTIDE SEQUENCE [LARGE SCALE MRNA] (ISOFORM 3)</scope>
    <source>
        <tissue>Fetal brain</tissue>
    </source>
</reference>
<reference key="2">
    <citation type="journal article" date="2005" name="Science">
        <title>The transcriptional landscape of the mammalian genome.</title>
        <authorList>
            <person name="Carninci P."/>
            <person name="Kasukawa T."/>
            <person name="Katayama S."/>
            <person name="Gough J."/>
            <person name="Frith M.C."/>
            <person name="Maeda N."/>
            <person name="Oyama R."/>
            <person name="Ravasi T."/>
            <person name="Lenhard B."/>
            <person name="Wells C."/>
            <person name="Kodzius R."/>
            <person name="Shimokawa K."/>
            <person name="Bajic V.B."/>
            <person name="Brenner S.E."/>
            <person name="Batalov S."/>
            <person name="Forrest A.R."/>
            <person name="Zavolan M."/>
            <person name="Davis M.J."/>
            <person name="Wilming L.G."/>
            <person name="Aidinis V."/>
            <person name="Allen J.E."/>
            <person name="Ambesi-Impiombato A."/>
            <person name="Apweiler R."/>
            <person name="Aturaliya R.N."/>
            <person name="Bailey T.L."/>
            <person name="Bansal M."/>
            <person name="Baxter L."/>
            <person name="Beisel K.W."/>
            <person name="Bersano T."/>
            <person name="Bono H."/>
            <person name="Chalk A.M."/>
            <person name="Chiu K.P."/>
            <person name="Choudhary V."/>
            <person name="Christoffels A."/>
            <person name="Clutterbuck D.R."/>
            <person name="Crowe M.L."/>
            <person name="Dalla E."/>
            <person name="Dalrymple B.P."/>
            <person name="de Bono B."/>
            <person name="Della Gatta G."/>
            <person name="di Bernardo D."/>
            <person name="Down T."/>
            <person name="Engstrom P."/>
            <person name="Fagiolini M."/>
            <person name="Faulkner G."/>
            <person name="Fletcher C.F."/>
            <person name="Fukushima T."/>
            <person name="Furuno M."/>
            <person name="Futaki S."/>
            <person name="Gariboldi M."/>
            <person name="Georgii-Hemming P."/>
            <person name="Gingeras T.R."/>
            <person name="Gojobori T."/>
            <person name="Green R.E."/>
            <person name="Gustincich S."/>
            <person name="Harbers M."/>
            <person name="Hayashi Y."/>
            <person name="Hensch T.K."/>
            <person name="Hirokawa N."/>
            <person name="Hill D."/>
            <person name="Huminiecki L."/>
            <person name="Iacono M."/>
            <person name="Ikeo K."/>
            <person name="Iwama A."/>
            <person name="Ishikawa T."/>
            <person name="Jakt M."/>
            <person name="Kanapin A."/>
            <person name="Katoh M."/>
            <person name="Kawasawa Y."/>
            <person name="Kelso J."/>
            <person name="Kitamura H."/>
            <person name="Kitano H."/>
            <person name="Kollias G."/>
            <person name="Krishnan S.P."/>
            <person name="Kruger A."/>
            <person name="Kummerfeld S.K."/>
            <person name="Kurochkin I.V."/>
            <person name="Lareau L.F."/>
            <person name="Lazarevic D."/>
            <person name="Lipovich L."/>
            <person name="Liu J."/>
            <person name="Liuni S."/>
            <person name="McWilliam S."/>
            <person name="Madan Babu M."/>
            <person name="Madera M."/>
            <person name="Marchionni L."/>
            <person name="Matsuda H."/>
            <person name="Matsuzawa S."/>
            <person name="Miki H."/>
            <person name="Mignone F."/>
            <person name="Miyake S."/>
            <person name="Morris K."/>
            <person name="Mottagui-Tabar S."/>
            <person name="Mulder N."/>
            <person name="Nakano N."/>
            <person name="Nakauchi H."/>
            <person name="Ng P."/>
            <person name="Nilsson R."/>
            <person name="Nishiguchi S."/>
            <person name="Nishikawa S."/>
            <person name="Nori F."/>
            <person name="Ohara O."/>
            <person name="Okazaki Y."/>
            <person name="Orlando V."/>
            <person name="Pang K.C."/>
            <person name="Pavan W.J."/>
            <person name="Pavesi G."/>
            <person name="Pesole G."/>
            <person name="Petrovsky N."/>
            <person name="Piazza S."/>
            <person name="Reed J."/>
            <person name="Reid J.F."/>
            <person name="Ring B.Z."/>
            <person name="Ringwald M."/>
            <person name="Rost B."/>
            <person name="Ruan Y."/>
            <person name="Salzberg S.L."/>
            <person name="Sandelin A."/>
            <person name="Schneider C."/>
            <person name="Schoenbach C."/>
            <person name="Sekiguchi K."/>
            <person name="Semple C.A."/>
            <person name="Seno S."/>
            <person name="Sessa L."/>
            <person name="Sheng Y."/>
            <person name="Shibata Y."/>
            <person name="Shimada H."/>
            <person name="Shimada K."/>
            <person name="Silva D."/>
            <person name="Sinclair B."/>
            <person name="Sperling S."/>
            <person name="Stupka E."/>
            <person name="Sugiura K."/>
            <person name="Sultana R."/>
            <person name="Takenaka Y."/>
            <person name="Taki K."/>
            <person name="Tammoja K."/>
            <person name="Tan S.L."/>
            <person name="Tang S."/>
            <person name="Taylor M.S."/>
            <person name="Tegner J."/>
            <person name="Teichmann S.A."/>
            <person name="Ueda H.R."/>
            <person name="van Nimwegen E."/>
            <person name="Verardo R."/>
            <person name="Wei C.L."/>
            <person name="Yagi K."/>
            <person name="Yamanishi H."/>
            <person name="Zabarovsky E."/>
            <person name="Zhu S."/>
            <person name="Zimmer A."/>
            <person name="Hide W."/>
            <person name="Bult C."/>
            <person name="Grimmond S.M."/>
            <person name="Teasdale R.D."/>
            <person name="Liu E.T."/>
            <person name="Brusic V."/>
            <person name="Quackenbush J."/>
            <person name="Wahlestedt C."/>
            <person name="Mattick J.S."/>
            <person name="Hume D.A."/>
            <person name="Kai C."/>
            <person name="Sasaki D."/>
            <person name="Tomaru Y."/>
            <person name="Fukuda S."/>
            <person name="Kanamori-Katayama M."/>
            <person name="Suzuki M."/>
            <person name="Aoki J."/>
            <person name="Arakawa T."/>
            <person name="Iida J."/>
            <person name="Imamura K."/>
            <person name="Itoh M."/>
            <person name="Kato T."/>
            <person name="Kawaji H."/>
            <person name="Kawagashira N."/>
            <person name="Kawashima T."/>
            <person name="Kojima M."/>
            <person name="Kondo S."/>
            <person name="Konno H."/>
            <person name="Nakano K."/>
            <person name="Ninomiya N."/>
            <person name="Nishio T."/>
            <person name="Okada M."/>
            <person name="Plessy C."/>
            <person name="Shibata K."/>
            <person name="Shiraki T."/>
            <person name="Suzuki S."/>
            <person name="Tagami M."/>
            <person name="Waki K."/>
            <person name="Watahiki A."/>
            <person name="Okamura-Oho Y."/>
            <person name="Suzuki H."/>
            <person name="Kawai J."/>
            <person name="Hayashizaki Y."/>
        </authorList>
    </citation>
    <scope>NUCLEOTIDE SEQUENCE [LARGE SCALE MRNA] (ISOFORMS 2 AND 4)</scope>
    <scope>NUCLEOTIDE SEQUENCE [LARGE SCALE MRNA] OF 311-991 (ISOFORM 5)</scope>
    <source>
        <strain>C57BL/6J</strain>
        <strain>NOD</strain>
        <tissue>Head</tissue>
    </source>
</reference>
<reference key="3">
    <citation type="journal article" date="2009" name="PLoS Biol.">
        <title>Lineage-specific biology revealed by a finished genome assembly of the mouse.</title>
        <authorList>
            <person name="Church D.M."/>
            <person name="Goodstadt L."/>
            <person name="Hillier L.W."/>
            <person name="Zody M.C."/>
            <person name="Goldstein S."/>
            <person name="She X."/>
            <person name="Bult C.J."/>
            <person name="Agarwala R."/>
            <person name="Cherry J.L."/>
            <person name="DiCuccio M."/>
            <person name="Hlavina W."/>
            <person name="Kapustin Y."/>
            <person name="Meric P."/>
            <person name="Maglott D."/>
            <person name="Birtle Z."/>
            <person name="Marques A.C."/>
            <person name="Graves T."/>
            <person name="Zhou S."/>
            <person name="Teague B."/>
            <person name="Potamousis K."/>
            <person name="Churas C."/>
            <person name="Place M."/>
            <person name="Herschleb J."/>
            <person name="Runnheim R."/>
            <person name="Forrest D."/>
            <person name="Amos-Landgraf J."/>
            <person name="Schwartz D.C."/>
            <person name="Cheng Z."/>
            <person name="Lindblad-Toh K."/>
            <person name="Eichler E.E."/>
            <person name="Ponting C.P."/>
        </authorList>
    </citation>
    <scope>NUCLEOTIDE SEQUENCE [LARGE SCALE GENOMIC DNA]</scope>
    <source>
        <strain>C57BL/6J</strain>
    </source>
</reference>
<reference key="4">
    <citation type="journal article" date="2010" name="Cell">
        <title>A tissue-specific atlas of mouse protein phosphorylation and expression.</title>
        <authorList>
            <person name="Huttlin E.L."/>
            <person name="Jedrychowski M.P."/>
            <person name="Elias J.E."/>
            <person name="Goswami T."/>
            <person name="Rad R."/>
            <person name="Beausoleil S.A."/>
            <person name="Villen J."/>
            <person name="Haas W."/>
            <person name="Sowa M.E."/>
            <person name="Gygi S.P."/>
        </authorList>
    </citation>
    <scope>PHOSPHORYLATION [LARGE SCALE ANALYSIS] AT SER-463</scope>
    <scope>IDENTIFICATION BY MASS SPECTROMETRY [LARGE SCALE ANALYSIS]</scope>
    <source>
        <tissue>Testis</tissue>
    </source>
</reference>
<reference key="5">
    <citation type="journal article" date="2013" name="Mol. Cell">
        <title>SIRT5-mediated lysine desuccinylation impacts diverse metabolic pathways.</title>
        <authorList>
            <person name="Park J."/>
            <person name="Chen Y."/>
            <person name="Tishkoff D.X."/>
            <person name="Peng C."/>
            <person name="Tan M."/>
            <person name="Dai L."/>
            <person name="Xie Z."/>
            <person name="Zhang Y."/>
            <person name="Zwaans B.M."/>
            <person name="Skinner M.E."/>
            <person name="Lombard D.B."/>
            <person name="Zhao Y."/>
        </authorList>
    </citation>
    <scope>ACETYLATION [LARGE SCALE ANALYSIS] AT LYS-863</scope>
    <scope>IDENTIFICATION BY MASS SPECTROMETRY [LARGE SCALE ANALYSIS]</scope>
    <source>
        <tissue>Embryonic fibroblast</tissue>
    </source>
</reference>
<accession>Q5DTI6</accession>
<accession>B2KGC3</accession>
<accession>E9QLD1</accession>
<accession>Q3TC00</accession>
<accession>Q8BNM1</accession>
<accession>Q8C4R5</accession>
<dbReference type="EMBL" id="AK220534">
    <property type="protein sequence ID" value="BAD90312.1"/>
    <property type="status" value="ALT_INIT"/>
    <property type="molecule type" value="mRNA"/>
</dbReference>
<dbReference type="EMBL" id="AK081413">
    <property type="protein sequence ID" value="BAC38212.1"/>
    <property type="molecule type" value="mRNA"/>
</dbReference>
<dbReference type="EMBL" id="AK082897">
    <property type="protein sequence ID" value="BAC38675.1"/>
    <property type="status" value="ALT_INIT"/>
    <property type="molecule type" value="mRNA"/>
</dbReference>
<dbReference type="EMBL" id="AK170981">
    <property type="protein sequence ID" value="BAE42157.1"/>
    <property type="molecule type" value="mRNA"/>
</dbReference>
<dbReference type="EMBL" id="AC118589">
    <property type="status" value="NOT_ANNOTATED_CDS"/>
    <property type="molecule type" value="Genomic_DNA"/>
</dbReference>
<dbReference type="EMBL" id="AC124389">
    <property type="status" value="NOT_ANNOTATED_CDS"/>
    <property type="molecule type" value="Genomic_DNA"/>
</dbReference>
<dbReference type="EMBL" id="CU329676">
    <property type="protein sequence ID" value="CAQ52187.1"/>
    <property type="molecule type" value="Genomic_DNA"/>
</dbReference>
<dbReference type="EMBL" id="CU302198">
    <property type="protein sequence ID" value="CAQ52187.1"/>
    <property type="status" value="JOINED"/>
    <property type="molecule type" value="Genomic_DNA"/>
</dbReference>
<dbReference type="EMBL" id="CU302198">
    <property type="protein sequence ID" value="CAQ52309.1"/>
    <property type="molecule type" value="Genomic_DNA"/>
</dbReference>
<dbReference type="EMBL" id="CU329676">
    <property type="protein sequence ID" value="CAQ52309.1"/>
    <property type="status" value="JOINED"/>
    <property type="molecule type" value="Genomic_DNA"/>
</dbReference>
<dbReference type="CCDS" id="CCDS35603.1">
    <molecule id="Q5DTI6-3"/>
</dbReference>
<dbReference type="RefSeq" id="NP_001116210.1">
    <molecule id="Q5DTI6-5"/>
    <property type="nucleotide sequence ID" value="NM_001122738.2"/>
</dbReference>
<dbReference type="RefSeq" id="NP_001344085.1">
    <molecule id="Q5DTI6-3"/>
    <property type="nucleotide sequence ID" value="NM_001357156.2"/>
</dbReference>
<dbReference type="RefSeq" id="NP_001418264.1">
    <molecule id="Q5DTI6-1"/>
    <property type="nucleotide sequence ID" value="NM_001431335.1"/>
</dbReference>
<dbReference type="RefSeq" id="NP_808313.3">
    <molecule id="Q5DTI6-3"/>
    <property type="nucleotide sequence ID" value="NM_177645.5"/>
</dbReference>
<dbReference type="RefSeq" id="XP_006496304.1">
    <property type="nucleotide sequence ID" value="XM_006496241.2"/>
</dbReference>
<dbReference type="RefSeq" id="XP_006496309.1">
    <property type="nucleotide sequence ID" value="XM_006496246.2"/>
</dbReference>
<dbReference type="RefSeq" id="XP_011236879.1">
    <molecule id="Q5DTI6-1"/>
    <property type="nucleotide sequence ID" value="XM_011238577.4"/>
</dbReference>
<dbReference type="RefSeq" id="XP_030098509.1">
    <molecule id="Q5DTI6-1"/>
    <property type="nucleotide sequence ID" value="XM_030242649.2"/>
</dbReference>
<dbReference type="RefSeq" id="XP_036009234.1">
    <molecule id="Q5DTI6-1"/>
    <property type="nucleotide sequence ID" value="XM_036153341.1"/>
</dbReference>
<dbReference type="RefSeq" id="XP_036009245.1">
    <molecule id="Q5DTI6-5"/>
    <property type="nucleotide sequence ID" value="XM_036153352.1"/>
</dbReference>
<dbReference type="RefSeq" id="XP_036009251.1">
    <molecule id="Q5DTI6-3"/>
    <property type="nucleotide sequence ID" value="XM_036153358.1"/>
</dbReference>
<dbReference type="RefSeq" id="XP_036009252.1">
    <molecule id="Q5DTI6-3"/>
    <property type="nucleotide sequence ID" value="XM_036153359.1"/>
</dbReference>
<dbReference type="SMR" id="Q5DTI6"/>
<dbReference type="FunCoup" id="Q5DTI6">
    <property type="interactions" value="359"/>
</dbReference>
<dbReference type="STRING" id="10090.ENSMUSP00000063843"/>
<dbReference type="iPTMnet" id="Q5DTI6"/>
<dbReference type="PhosphoSitePlus" id="Q5DTI6"/>
<dbReference type="jPOST" id="Q5DTI6"/>
<dbReference type="PaxDb" id="10090-ENSMUSP00000063843"/>
<dbReference type="ProteomicsDB" id="301713">
    <molecule id="Q5DTI6-1"/>
</dbReference>
<dbReference type="ProteomicsDB" id="301714">
    <molecule id="Q5DTI6-2"/>
</dbReference>
<dbReference type="ProteomicsDB" id="301715">
    <molecule id="Q5DTI6-3"/>
</dbReference>
<dbReference type="ProteomicsDB" id="301716">
    <molecule id="Q5DTI6-4"/>
</dbReference>
<dbReference type="ProteomicsDB" id="301717">
    <molecule id="Q5DTI6-5"/>
</dbReference>
<dbReference type="Antibodypedia" id="63309">
    <property type="antibodies" value="31 antibodies from 12 providers"/>
</dbReference>
<dbReference type="DNASU" id="68691"/>
<dbReference type="Ensembl" id="ENSMUST00000068168.10">
    <molecule id="Q5DTI6-3"/>
    <property type="protein sequence ID" value="ENSMUSP00000063843.4"/>
    <property type="gene ID" value="ENSMUSG00000026004.16"/>
</dbReference>
<dbReference type="GeneID" id="68691"/>
<dbReference type="KEGG" id="mmu:68691"/>
<dbReference type="UCSC" id="uc007bim.2">
    <molecule id="Q5DTI6-5"/>
    <property type="organism name" value="mouse"/>
</dbReference>
<dbReference type="UCSC" id="uc007bin.2">
    <molecule id="Q5DTI6-3"/>
    <property type="organism name" value="mouse"/>
</dbReference>
<dbReference type="UCSC" id="uc007bip.1">
    <molecule id="Q5DTI6-2"/>
    <property type="organism name" value="mouse"/>
</dbReference>
<dbReference type="UCSC" id="uc007biq.2">
    <molecule id="Q5DTI6-4"/>
    <property type="organism name" value="mouse"/>
</dbReference>
<dbReference type="AGR" id="MGI:1915941"/>
<dbReference type="CTD" id="151050"/>
<dbReference type="MGI" id="MGI:1915941">
    <property type="gene designation" value="Kansl1l"/>
</dbReference>
<dbReference type="VEuPathDB" id="HostDB:ENSMUSG00000026004"/>
<dbReference type="eggNOG" id="ENOG502QRI7">
    <property type="taxonomic scope" value="Eukaryota"/>
</dbReference>
<dbReference type="GeneTree" id="ENSGT00530000063688"/>
<dbReference type="InParanoid" id="Q5DTI6"/>
<dbReference type="OMA" id="WRVVDIQ"/>
<dbReference type="TreeFam" id="TF336511"/>
<dbReference type="BioGRID-ORCS" id="68691">
    <property type="hits" value="1 hit in 77 CRISPR screens"/>
</dbReference>
<dbReference type="ChiTaRS" id="Kansl1l">
    <property type="organism name" value="mouse"/>
</dbReference>
<dbReference type="PRO" id="PR:Q5DTI6"/>
<dbReference type="Proteomes" id="UP000000589">
    <property type="component" value="Chromosome 1"/>
</dbReference>
<dbReference type="RNAct" id="Q5DTI6">
    <property type="molecule type" value="protein"/>
</dbReference>
<dbReference type="Bgee" id="ENSMUSG00000026004">
    <property type="expression patterns" value="Expressed in spermatocyte and 245 other cell types or tissues"/>
</dbReference>
<dbReference type="ExpressionAtlas" id="Q5DTI6">
    <property type="expression patterns" value="baseline and differential"/>
</dbReference>
<dbReference type="GO" id="GO:1902562">
    <property type="term" value="C:H4 histone acetyltransferase complex"/>
    <property type="evidence" value="ECO:0007669"/>
    <property type="project" value="UniProtKB-ARBA"/>
</dbReference>
<dbReference type="GO" id="GO:0043231">
    <property type="term" value="C:intracellular membrane-bounded organelle"/>
    <property type="evidence" value="ECO:0007669"/>
    <property type="project" value="UniProtKB-ARBA"/>
</dbReference>
<dbReference type="Gene3D" id="6.10.250.3170">
    <property type="match status" value="1"/>
</dbReference>
<dbReference type="InterPro" id="IPR026180">
    <property type="entry name" value="NSL1"/>
</dbReference>
<dbReference type="InterPro" id="IPR029332">
    <property type="entry name" value="PEHE_dom"/>
</dbReference>
<dbReference type="PANTHER" id="PTHR22443:SF16">
    <property type="entry name" value="KAT8 REGULATORY NSL COMPLEX SUBUNIT 1-LIKE PROTEIN"/>
    <property type="match status" value="1"/>
</dbReference>
<dbReference type="PANTHER" id="PTHR22443">
    <property type="entry name" value="NON-SPECIFIC LETHAL 1, ISOFORM M"/>
    <property type="match status" value="1"/>
</dbReference>
<dbReference type="Pfam" id="PF15275">
    <property type="entry name" value="PEHE"/>
    <property type="match status" value="1"/>
</dbReference>
<dbReference type="SMART" id="SM01300">
    <property type="entry name" value="PEHE"/>
    <property type="match status" value="1"/>
</dbReference>
<dbReference type="PROSITE" id="PS52052">
    <property type="entry name" value="PEHE"/>
    <property type="match status" value="1"/>
</dbReference>
<keyword id="KW-0007">Acetylation</keyword>
<keyword id="KW-0025">Alternative splicing</keyword>
<keyword id="KW-1017">Isopeptide bond</keyword>
<keyword id="KW-0597">Phosphoprotein</keyword>
<keyword id="KW-1185">Reference proteome</keyword>
<keyword id="KW-0832">Ubl conjugation</keyword>
<sequence>MTPALKEATTKGICFSSLPNTMESDKMLCMESPRTVDEKLKGGDTFSQMLGFPTPEPTLNTNFVNLKHFASPQASKHFQTVLLMSSNSTLNKYNENYNQKKVMESNCSKLKNVLCNGSSIQLSKICPSHSENEFIKKELSDTTSQCMKDIQIVLDSNLTKDANVDRLHLQNCKWYQKNALLDKFTDTKIKKGLLQCTQKKIGPSHSDVPTSSSAAEKEQEVNARLLHCVSKQKILLSQARRTQKHLQMLLAKHVVKHYGQQMKFSMKHQLPTMKIFHEPTTVLSNSLLEHTEIKPEVNILASENKFWDDTNNGFSQCTAAEIQRFALSATGLLSHVEEGLDSDATDSSSDDELDEYTIRKNVAVNSSTEWKWLVDRAQVGSRWTWLQAQISELEYKIQQLTDIHRQIRASKGIVILEECQLPKDILKKQIQFSNQAVSLNTSVNSQVPQRSEEPLPEHDFEMSPSSPTLLLRNIEKQSAQLTEIINSLIAPLNLSPTSSPLSSKSCSHKCLANGISRSASENLDELSSSSSWLLNQKHSKKRRKDRTRLKSPSLAIMSTAARTRPLQSFHKRKLYRLSPTFYWTPETLPSKEAFLSSTQTPYTGSPFSWDNWEQSSRSHLLREQVSKLDSSFHPVLSLPSEIPLHLHFETLFKKTDMKGELAENQFVGDCLISPPPVQGTSSLNQWRNGYSPICKPQIRSQPSVQLLQGRKKRHLSETALAGERTRFEEFAFQRSEPGSHCNFTAVSNANVTSRTQNPSSQNTSRRRLRSESSYDIDNIVIPMSLVAPAKLEKLQYKEILTPRWRKVVLQPLDEHNLNKEEIEDLSDDVFSLRHRKYEEREQARWSLWEQSKWHRRNNRAYSKNVEGQDLVLKEHSSELGSAQQGTAESPFELPAESHSLCAQDSLSLNDGQEDKSLRWERRAFPLKDEDTAALLCQDERKDQTGGTSTAFHDEVFCSTTPESGHPPKMQLDGMEEYKSFGIGVTNVKRNR</sequence>
<proteinExistence type="evidence at protein level"/>
<name>KAL1L_MOUSE</name>
<comment type="alternative products">
    <event type="alternative splicing"/>
    <isoform>
        <id>Q5DTI6-1</id>
        <name>1</name>
        <sequence type="displayed"/>
    </isoform>
    <isoform>
        <id>Q5DTI6-2</id>
        <name>2</name>
        <sequence type="described" ref="VSP_031505 VSP_031506"/>
    </isoform>
    <isoform>
        <id>Q5DTI6-3</id>
        <name>3</name>
        <sequence type="described" ref="VSP_031507"/>
    </isoform>
    <isoform>
        <id>Q5DTI6-4</id>
        <name>4</name>
        <sequence type="described" ref="VSP_031502 VSP_031503"/>
    </isoform>
    <isoform>
        <id>Q5DTI6-5</id>
        <name>5</name>
        <sequence type="described" ref="VSP_031504"/>
    </isoform>
</comment>
<comment type="PTM">
    <text evidence="1">Acetylated on lysine residues by KAT8 upon ionizing radiation-induced DNA damage; deacetylated by HDAC3.</text>
</comment>
<comment type="sequence caution" evidence="7">
    <conflict type="erroneous initiation">
        <sequence resource="EMBL-CDS" id="BAC38675"/>
    </conflict>
    <text>Truncated N-terminus.</text>
</comment>
<comment type="sequence caution" evidence="7">
    <conflict type="erroneous initiation">
        <sequence resource="EMBL-CDS" id="BAD90312"/>
    </conflict>
    <text>Extended N-terminus.</text>
</comment>
<protein>
    <recommendedName>
        <fullName>KAT8 regulatory NSL complex subunit 1-like protein</fullName>
    </recommendedName>
</protein>
<organism>
    <name type="scientific">Mus musculus</name>
    <name type="common">Mouse</name>
    <dbReference type="NCBI Taxonomy" id="10090"/>
    <lineage>
        <taxon>Eukaryota</taxon>
        <taxon>Metazoa</taxon>
        <taxon>Chordata</taxon>
        <taxon>Craniata</taxon>
        <taxon>Vertebrata</taxon>
        <taxon>Euteleostomi</taxon>
        <taxon>Mammalia</taxon>
        <taxon>Eutheria</taxon>
        <taxon>Euarchontoglires</taxon>
        <taxon>Glires</taxon>
        <taxon>Rodentia</taxon>
        <taxon>Myomorpha</taxon>
        <taxon>Muroidea</taxon>
        <taxon>Muridae</taxon>
        <taxon>Murinae</taxon>
        <taxon>Mus</taxon>
        <taxon>Mus</taxon>
    </lineage>
</organism>
<gene>
    <name type="primary">Kansl1l</name>
    <name type="synonym">Kiaa4189</name>
</gene>